<name>DER_ECO57</name>
<dbReference type="EMBL" id="AE005174">
    <property type="protein sequence ID" value="AAG57621.1"/>
    <property type="status" value="ALT_INIT"/>
    <property type="molecule type" value="Genomic_DNA"/>
</dbReference>
<dbReference type="EMBL" id="BA000007">
    <property type="protein sequence ID" value="BAB36796.2"/>
    <property type="molecule type" value="Genomic_DNA"/>
</dbReference>
<dbReference type="RefSeq" id="NP_311400.2">
    <property type="nucleotide sequence ID" value="NC_002695.1"/>
</dbReference>
<dbReference type="RefSeq" id="WP_000249410.1">
    <property type="nucleotide sequence ID" value="NZ_VOAI01000001.1"/>
</dbReference>
<dbReference type="SMR" id="P0A6P6"/>
<dbReference type="STRING" id="155864.Z3774"/>
<dbReference type="GeneID" id="75206204"/>
<dbReference type="GeneID" id="915214"/>
<dbReference type="KEGG" id="ece:Z3774"/>
<dbReference type="KEGG" id="ecs:ECs_3373"/>
<dbReference type="PATRIC" id="fig|386585.9.peg.3524"/>
<dbReference type="eggNOG" id="COG1160">
    <property type="taxonomic scope" value="Bacteria"/>
</dbReference>
<dbReference type="HOGENOM" id="CLU_016077_5_1_6"/>
<dbReference type="OMA" id="CNLPQYV"/>
<dbReference type="Proteomes" id="UP000000558">
    <property type="component" value="Chromosome"/>
</dbReference>
<dbReference type="Proteomes" id="UP000002519">
    <property type="component" value="Chromosome"/>
</dbReference>
<dbReference type="GO" id="GO:0005525">
    <property type="term" value="F:GTP binding"/>
    <property type="evidence" value="ECO:0007669"/>
    <property type="project" value="UniProtKB-UniRule"/>
</dbReference>
<dbReference type="GO" id="GO:0043022">
    <property type="term" value="F:ribosome binding"/>
    <property type="evidence" value="ECO:0007669"/>
    <property type="project" value="TreeGrafter"/>
</dbReference>
<dbReference type="GO" id="GO:0042254">
    <property type="term" value="P:ribosome biogenesis"/>
    <property type="evidence" value="ECO:0007669"/>
    <property type="project" value="UniProtKB-KW"/>
</dbReference>
<dbReference type="CDD" id="cd01894">
    <property type="entry name" value="EngA1"/>
    <property type="match status" value="1"/>
</dbReference>
<dbReference type="CDD" id="cd01895">
    <property type="entry name" value="EngA2"/>
    <property type="match status" value="1"/>
</dbReference>
<dbReference type="FunFam" id="3.30.300.20:FF:000004">
    <property type="entry name" value="GTPase Der"/>
    <property type="match status" value="1"/>
</dbReference>
<dbReference type="FunFam" id="3.40.50.300:FF:000040">
    <property type="entry name" value="GTPase Der"/>
    <property type="match status" value="1"/>
</dbReference>
<dbReference type="FunFam" id="3.40.50.300:FF:000057">
    <property type="entry name" value="GTPase Der"/>
    <property type="match status" value="1"/>
</dbReference>
<dbReference type="Gene3D" id="3.30.300.20">
    <property type="match status" value="1"/>
</dbReference>
<dbReference type="Gene3D" id="3.40.50.300">
    <property type="entry name" value="P-loop containing nucleotide triphosphate hydrolases"/>
    <property type="match status" value="2"/>
</dbReference>
<dbReference type="HAMAP" id="MF_00195">
    <property type="entry name" value="GTPase_Der"/>
    <property type="match status" value="1"/>
</dbReference>
<dbReference type="InterPro" id="IPR031166">
    <property type="entry name" value="G_ENGA"/>
</dbReference>
<dbReference type="InterPro" id="IPR006073">
    <property type="entry name" value="GTP-bd"/>
</dbReference>
<dbReference type="InterPro" id="IPR016484">
    <property type="entry name" value="GTPase_Der"/>
</dbReference>
<dbReference type="InterPro" id="IPR032859">
    <property type="entry name" value="KH_dom-like"/>
</dbReference>
<dbReference type="InterPro" id="IPR015946">
    <property type="entry name" value="KH_dom-like_a/b"/>
</dbReference>
<dbReference type="InterPro" id="IPR027417">
    <property type="entry name" value="P-loop_NTPase"/>
</dbReference>
<dbReference type="InterPro" id="IPR005225">
    <property type="entry name" value="Small_GTP-bd"/>
</dbReference>
<dbReference type="NCBIfam" id="TIGR03594">
    <property type="entry name" value="GTPase_EngA"/>
    <property type="match status" value="1"/>
</dbReference>
<dbReference type="NCBIfam" id="TIGR00231">
    <property type="entry name" value="small_GTP"/>
    <property type="match status" value="2"/>
</dbReference>
<dbReference type="PANTHER" id="PTHR43834">
    <property type="entry name" value="GTPASE DER"/>
    <property type="match status" value="1"/>
</dbReference>
<dbReference type="PANTHER" id="PTHR43834:SF6">
    <property type="entry name" value="GTPASE DER"/>
    <property type="match status" value="1"/>
</dbReference>
<dbReference type="Pfam" id="PF14714">
    <property type="entry name" value="KH_dom-like"/>
    <property type="match status" value="1"/>
</dbReference>
<dbReference type="Pfam" id="PF01926">
    <property type="entry name" value="MMR_HSR1"/>
    <property type="match status" value="2"/>
</dbReference>
<dbReference type="PIRSF" id="PIRSF006485">
    <property type="entry name" value="GTP-binding_EngA"/>
    <property type="match status" value="1"/>
</dbReference>
<dbReference type="PRINTS" id="PR00326">
    <property type="entry name" value="GTP1OBG"/>
</dbReference>
<dbReference type="SUPFAM" id="SSF52540">
    <property type="entry name" value="P-loop containing nucleoside triphosphate hydrolases"/>
    <property type="match status" value="2"/>
</dbReference>
<dbReference type="PROSITE" id="PS51712">
    <property type="entry name" value="G_ENGA"/>
    <property type="match status" value="2"/>
</dbReference>
<proteinExistence type="inferred from homology"/>
<feature type="chain" id="PRO_0000178992" description="GTPase Der">
    <location>
        <begin position="1"/>
        <end position="490"/>
    </location>
</feature>
<feature type="domain" description="EngA-type G 1">
    <location>
        <begin position="3"/>
        <end position="166"/>
    </location>
</feature>
<feature type="domain" description="EngA-type G 2">
    <location>
        <begin position="203"/>
        <end position="376"/>
    </location>
</feature>
<feature type="domain" description="KH-like" evidence="1">
    <location>
        <begin position="377"/>
        <end position="461"/>
    </location>
</feature>
<feature type="binding site" evidence="1">
    <location>
        <begin position="9"/>
        <end position="16"/>
    </location>
    <ligand>
        <name>GTP</name>
        <dbReference type="ChEBI" id="CHEBI:37565"/>
        <label>1</label>
    </ligand>
</feature>
<feature type="binding site" evidence="1">
    <location>
        <begin position="56"/>
        <end position="60"/>
    </location>
    <ligand>
        <name>GTP</name>
        <dbReference type="ChEBI" id="CHEBI:37565"/>
        <label>1</label>
    </ligand>
</feature>
<feature type="binding site" evidence="1">
    <location>
        <begin position="118"/>
        <end position="121"/>
    </location>
    <ligand>
        <name>GTP</name>
        <dbReference type="ChEBI" id="CHEBI:37565"/>
        <label>1</label>
    </ligand>
</feature>
<feature type="binding site" evidence="1">
    <location>
        <begin position="209"/>
        <end position="216"/>
    </location>
    <ligand>
        <name>GTP</name>
        <dbReference type="ChEBI" id="CHEBI:37565"/>
        <label>2</label>
    </ligand>
</feature>
<feature type="binding site" evidence="1">
    <location>
        <begin position="256"/>
        <end position="260"/>
    </location>
    <ligand>
        <name>GTP</name>
        <dbReference type="ChEBI" id="CHEBI:37565"/>
        <label>2</label>
    </ligand>
</feature>
<feature type="binding site" evidence="1">
    <location>
        <begin position="321"/>
        <end position="324"/>
    </location>
    <ligand>
        <name>GTP</name>
        <dbReference type="ChEBI" id="CHEBI:37565"/>
        <label>2</label>
    </ligand>
</feature>
<organism>
    <name type="scientific">Escherichia coli O157:H7</name>
    <dbReference type="NCBI Taxonomy" id="83334"/>
    <lineage>
        <taxon>Bacteria</taxon>
        <taxon>Pseudomonadati</taxon>
        <taxon>Pseudomonadota</taxon>
        <taxon>Gammaproteobacteria</taxon>
        <taxon>Enterobacterales</taxon>
        <taxon>Enterobacteriaceae</taxon>
        <taxon>Escherichia</taxon>
    </lineage>
</organism>
<protein>
    <recommendedName>
        <fullName evidence="1">GTPase Der</fullName>
    </recommendedName>
    <alternativeName>
        <fullName evidence="1">GTP-binding protein EngA</fullName>
    </alternativeName>
</protein>
<keyword id="KW-0342">GTP-binding</keyword>
<keyword id="KW-0547">Nucleotide-binding</keyword>
<keyword id="KW-1185">Reference proteome</keyword>
<keyword id="KW-0677">Repeat</keyword>
<keyword id="KW-0690">Ribosome biogenesis</keyword>
<gene>
    <name evidence="1" type="primary">der</name>
    <name type="synonym">engA</name>
    <name type="ordered locus">Z3774</name>
    <name type="ordered locus">ECs3373</name>
</gene>
<sequence>MVPVVALVGRPNVGKSTLFNRLTRTRDALVADFPGLTRDRKYGRAEIEGREFICIDTGGIDGTEDGVETRMAEQSLLAIEEADVVLFMVDARAGLMPADEAIAKHLRSREKPTFLVANKTDGLDPDQAVVDFYSLGLGEIYPIAASHGRGVLSLLEHVLLPWMEDLAPQEEVDEDAEYWAQFEAEENGEEEEEDDFDPQSLPIKLAIVGRPNVGKSTLTNRILGEERVVVYDMPGTTRDSIYIPMERDGREYVLIDTAGVRKRGKITDAVEKFSVIKTLQAIEDANVVMLVIDAREGISDQDLSLLGFILNSGRSLVIVVNKWDGLSQEVKEQVKETLDFRLGFIDFARVHFISALHGSGVGNLFESVREAYDSSTRRVGTSMLTRIMTMAVEDHQPPLVRGRRVKLKYAHAGGYNPPIVVIHGNQVKDLPDSYKRYLMNYFRKSLDVMGSPIRIQFKEGENPYANKRNTLTPTQMRKRKRLMKHIKKNK</sequence>
<comment type="function">
    <text evidence="1">GTPase that plays an essential role in the late steps of ribosome biogenesis.</text>
</comment>
<comment type="subunit">
    <text evidence="1">Associates with the 50S ribosomal subunit.</text>
</comment>
<comment type="similarity">
    <text evidence="1">Belongs to the TRAFAC class TrmE-Era-EngA-EngB-Septin-like GTPase superfamily. EngA (Der) GTPase family.</text>
</comment>
<comment type="sequence caution" evidence="2">
    <conflict type="erroneous initiation">
        <sequence resource="EMBL-CDS" id="AAG57621"/>
    </conflict>
    <text>Extended N-terminus.</text>
</comment>
<reference key="1">
    <citation type="journal article" date="2001" name="Nature">
        <title>Genome sequence of enterohaemorrhagic Escherichia coli O157:H7.</title>
        <authorList>
            <person name="Perna N.T."/>
            <person name="Plunkett G. III"/>
            <person name="Burland V."/>
            <person name="Mau B."/>
            <person name="Glasner J.D."/>
            <person name="Rose D.J."/>
            <person name="Mayhew G.F."/>
            <person name="Evans P.S."/>
            <person name="Gregor J."/>
            <person name="Kirkpatrick H.A."/>
            <person name="Posfai G."/>
            <person name="Hackett J."/>
            <person name="Klink S."/>
            <person name="Boutin A."/>
            <person name="Shao Y."/>
            <person name="Miller L."/>
            <person name="Grotbeck E.J."/>
            <person name="Davis N.W."/>
            <person name="Lim A."/>
            <person name="Dimalanta E.T."/>
            <person name="Potamousis K."/>
            <person name="Apodaca J."/>
            <person name="Anantharaman T.S."/>
            <person name="Lin J."/>
            <person name="Yen G."/>
            <person name="Schwartz D.C."/>
            <person name="Welch R.A."/>
            <person name="Blattner F.R."/>
        </authorList>
    </citation>
    <scope>NUCLEOTIDE SEQUENCE [LARGE SCALE GENOMIC DNA]</scope>
    <source>
        <strain>O157:H7 / EDL933 / ATCC 700927 / EHEC</strain>
    </source>
</reference>
<reference key="2">
    <citation type="journal article" date="2001" name="DNA Res.">
        <title>Complete genome sequence of enterohemorrhagic Escherichia coli O157:H7 and genomic comparison with a laboratory strain K-12.</title>
        <authorList>
            <person name="Hayashi T."/>
            <person name="Makino K."/>
            <person name="Ohnishi M."/>
            <person name="Kurokawa K."/>
            <person name="Ishii K."/>
            <person name="Yokoyama K."/>
            <person name="Han C.-G."/>
            <person name="Ohtsubo E."/>
            <person name="Nakayama K."/>
            <person name="Murata T."/>
            <person name="Tanaka M."/>
            <person name="Tobe T."/>
            <person name="Iida T."/>
            <person name="Takami H."/>
            <person name="Honda T."/>
            <person name="Sasakawa C."/>
            <person name="Ogasawara N."/>
            <person name="Yasunaga T."/>
            <person name="Kuhara S."/>
            <person name="Shiba T."/>
            <person name="Hattori M."/>
            <person name="Shinagawa H."/>
        </authorList>
    </citation>
    <scope>NUCLEOTIDE SEQUENCE [LARGE SCALE GENOMIC DNA]</scope>
    <source>
        <strain>O157:H7 / Sakai / RIMD 0509952 / EHEC</strain>
    </source>
</reference>
<evidence type="ECO:0000255" key="1">
    <source>
        <dbReference type="HAMAP-Rule" id="MF_00195"/>
    </source>
</evidence>
<evidence type="ECO:0000305" key="2"/>
<accession>P0A6P6</accession>
<accession>P77254</accession>
<accession>Q8X4Y1</accession>